<protein>
    <recommendedName>
        <fullName evidence="1">Putative membrane protein insertion efficiency factor</fullName>
    </recommendedName>
</protein>
<keyword id="KW-0997">Cell inner membrane</keyword>
<keyword id="KW-1003">Cell membrane</keyword>
<keyword id="KW-0472">Membrane</keyword>
<keyword id="KW-1185">Reference proteome</keyword>
<reference key="1">
    <citation type="journal article" date="2004" name="Science">
        <title>The genomic sequence of the accidental pathogen Legionella pneumophila.</title>
        <authorList>
            <person name="Chien M."/>
            <person name="Morozova I."/>
            <person name="Shi S."/>
            <person name="Sheng H."/>
            <person name="Chen J."/>
            <person name="Gomez S.M."/>
            <person name="Asamani G."/>
            <person name="Hill K."/>
            <person name="Nuara J."/>
            <person name="Feder M."/>
            <person name="Rineer J."/>
            <person name="Greenberg J.J."/>
            <person name="Steshenko V."/>
            <person name="Park S.H."/>
            <person name="Zhao B."/>
            <person name="Teplitskaya E."/>
            <person name="Edwards J.R."/>
            <person name="Pampou S."/>
            <person name="Georghiou A."/>
            <person name="Chou I.-C."/>
            <person name="Iannuccilli W."/>
            <person name="Ulz M.E."/>
            <person name="Kim D.H."/>
            <person name="Geringer-Sameth A."/>
            <person name="Goldsberry C."/>
            <person name="Morozov P."/>
            <person name="Fischer S.G."/>
            <person name="Segal G."/>
            <person name="Qu X."/>
            <person name="Rzhetsky A."/>
            <person name="Zhang P."/>
            <person name="Cayanis E."/>
            <person name="De Jong P.J."/>
            <person name="Ju J."/>
            <person name="Kalachikov S."/>
            <person name="Shuman H.A."/>
            <person name="Russo J.J."/>
        </authorList>
    </citation>
    <scope>NUCLEOTIDE SEQUENCE [LARGE SCALE GENOMIC DNA]</scope>
    <source>
        <strain>Philadelphia 1 / ATCC 33152 / DSM 7513</strain>
    </source>
</reference>
<accession>Q5ZR80</accession>
<dbReference type="EMBL" id="AE017354">
    <property type="protein sequence ID" value="AAU29048.1"/>
    <property type="molecule type" value="Genomic_DNA"/>
</dbReference>
<dbReference type="RefSeq" id="YP_096995.1">
    <property type="nucleotide sequence ID" value="NC_002942.5"/>
</dbReference>
<dbReference type="STRING" id="272624.lpg3003"/>
<dbReference type="PaxDb" id="272624-lpg3003"/>
<dbReference type="KEGG" id="lpn:lpg3003"/>
<dbReference type="PATRIC" id="fig|272624.6.peg.3210"/>
<dbReference type="eggNOG" id="COG0759">
    <property type="taxonomic scope" value="Bacteria"/>
</dbReference>
<dbReference type="HOGENOM" id="CLU_144811_6_0_6"/>
<dbReference type="OrthoDB" id="9801753at2"/>
<dbReference type="Proteomes" id="UP000000609">
    <property type="component" value="Chromosome"/>
</dbReference>
<dbReference type="GO" id="GO:0005886">
    <property type="term" value="C:plasma membrane"/>
    <property type="evidence" value="ECO:0007669"/>
    <property type="project" value="UniProtKB-SubCell"/>
</dbReference>
<dbReference type="HAMAP" id="MF_00386">
    <property type="entry name" value="UPF0161_YidD"/>
    <property type="match status" value="1"/>
</dbReference>
<dbReference type="InterPro" id="IPR002696">
    <property type="entry name" value="Membr_insert_effic_factor_YidD"/>
</dbReference>
<dbReference type="NCBIfam" id="TIGR00278">
    <property type="entry name" value="membrane protein insertion efficiency factor YidD"/>
    <property type="match status" value="1"/>
</dbReference>
<dbReference type="PANTHER" id="PTHR33383">
    <property type="entry name" value="MEMBRANE PROTEIN INSERTION EFFICIENCY FACTOR-RELATED"/>
    <property type="match status" value="1"/>
</dbReference>
<dbReference type="PANTHER" id="PTHR33383:SF1">
    <property type="entry name" value="MEMBRANE PROTEIN INSERTION EFFICIENCY FACTOR-RELATED"/>
    <property type="match status" value="1"/>
</dbReference>
<dbReference type="Pfam" id="PF01809">
    <property type="entry name" value="YidD"/>
    <property type="match status" value="1"/>
</dbReference>
<dbReference type="SMART" id="SM01234">
    <property type="entry name" value="Haemolytic"/>
    <property type="match status" value="1"/>
</dbReference>
<sequence length="81" mass="9320">MGKISLMLRQIVCLPIKMYQYFISPLITPCCRYYPSCSEYADSAIKHYGVIKGLLMALNRLSRCHPWSKGGYDPLFPNDKN</sequence>
<feature type="chain" id="PRO_0000253121" description="Putative membrane protein insertion efficiency factor">
    <location>
        <begin position="1"/>
        <end position="81"/>
    </location>
</feature>
<comment type="function">
    <text evidence="1">Could be involved in insertion of integral membrane proteins into the membrane.</text>
</comment>
<comment type="subcellular location">
    <subcellularLocation>
        <location evidence="1">Cell inner membrane</location>
        <topology evidence="1">Peripheral membrane protein</topology>
        <orientation evidence="1">Cytoplasmic side</orientation>
    </subcellularLocation>
</comment>
<comment type="similarity">
    <text evidence="1">Belongs to the UPF0161 family.</text>
</comment>
<evidence type="ECO:0000255" key="1">
    <source>
        <dbReference type="HAMAP-Rule" id="MF_00386"/>
    </source>
</evidence>
<gene>
    <name type="ordered locus">lpg3003</name>
</gene>
<name>YIDD_LEGPH</name>
<proteinExistence type="inferred from homology"/>
<organism>
    <name type="scientific">Legionella pneumophila subsp. pneumophila (strain Philadelphia 1 / ATCC 33152 / DSM 7513)</name>
    <dbReference type="NCBI Taxonomy" id="272624"/>
    <lineage>
        <taxon>Bacteria</taxon>
        <taxon>Pseudomonadati</taxon>
        <taxon>Pseudomonadota</taxon>
        <taxon>Gammaproteobacteria</taxon>
        <taxon>Legionellales</taxon>
        <taxon>Legionellaceae</taxon>
        <taxon>Legionella</taxon>
    </lineage>
</organism>